<gene>
    <name type="ordered locus">DvMF_0538</name>
</gene>
<keyword id="KW-0002">3D-structure</keyword>
<keyword id="KW-0903">Direct protein sequencing</keyword>
<keyword id="KW-0249">Electron transport</keyword>
<keyword id="KW-0349">Heme</keyword>
<keyword id="KW-0408">Iron</keyword>
<keyword id="KW-0479">Metal-binding</keyword>
<keyword id="KW-0574">Periplasm</keyword>
<keyword id="KW-0732">Signal</keyword>
<keyword id="KW-0813">Transport</keyword>
<name>CY553_NITV9</name>
<comment type="function">
    <text>Natural electron acceptor for a formate dehydrogenase.</text>
</comment>
<comment type="subcellular location">
    <subcellularLocation>
        <location>Periplasm</location>
    </subcellularLocation>
</comment>
<comment type="PTM">
    <text>Binds 1 heme c group covalently per subunit.</text>
</comment>
<protein>
    <recommendedName>
        <fullName>Cytochrome c-553</fullName>
    </recommendedName>
    <alternativeName>
        <fullName>Cytochrome c553</fullName>
    </alternativeName>
</protein>
<proteinExistence type="evidence at protein level"/>
<feature type="signal peptide" evidence="1">
    <location>
        <begin position="1"/>
        <end position="23"/>
    </location>
</feature>
<feature type="chain" id="PRO_0000006536" description="Cytochrome c-553">
    <location>
        <begin position="24"/>
        <end position="102"/>
    </location>
</feature>
<feature type="binding site" description="covalent">
    <location>
        <position position="33"/>
    </location>
    <ligand>
        <name>heme c</name>
        <dbReference type="ChEBI" id="CHEBI:61717"/>
    </ligand>
</feature>
<feature type="binding site" description="covalent">
    <location>
        <position position="36"/>
    </location>
    <ligand>
        <name>heme c</name>
        <dbReference type="ChEBI" id="CHEBI:61717"/>
    </ligand>
</feature>
<feature type="binding site" description="axial binding residue">
    <location>
        <position position="37"/>
    </location>
    <ligand>
        <name>heme c</name>
        <dbReference type="ChEBI" id="CHEBI:61717"/>
    </ligand>
    <ligandPart>
        <name>Fe</name>
        <dbReference type="ChEBI" id="CHEBI:18248"/>
    </ligandPart>
</feature>
<feature type="binding site" description="axial binding residue">
    <location>
        <position position="80"/>
    </location>
    <ligand>
        <name>heme c</name>
        <dbReference type="ChEBI" id="CHEBI:61717"/>
    </ligand>
    <ligandPart>
        <name>Fe</name>
        <dbReference type="ChEBI" id="CHEBI:18248"/>
    </ligandPart>
</feature>
<reference key="1">
    <citation type="journal article" date="1995" name="Microbiol. Immunol.">
        <title>A gene encoding a cytochrome c oxidase-like protein is located closely to the cytochrome c-553 gene in the anaerobic bacterium, Desulfovibrio vulgaris (Miyazaki F).</title>
        <authorList>
            <person name="Kitamura M."/>
            <person name="Mizugai K."/>
            <person name="Taniguchi M."/>
            <person name="Akutsu H."/>
            <person name="Kumagai I."/>
            <person name="Nakaya T."/>
        </authorList>
    </citation>
    <scope>NUCLEOTIDE SEQUENCE [GENOMIC DNA]</scope>
</reference>
<reference key="2">
    <citation type="submission" date="2008-10" db="EMBL/GenBank/DDBJ databases">
        <title>Complete sequence of Desulfovibrio vulgaris str. 'Miyazaki F'.</title>
        <authorList>
            <person name="Lucas S."/>
            <person name="Copeland A."/>
            <person name="Lapidus A."/>
            <person name="Glavina del Rio T."/>
            <person name="Dalin E."/>
            <person name="Tice H."/>
            <person name="Bruce D."/>
            <person name="Goodwin L."/>
            <person name="Pitluck S."/>
            <person name="Sims D."/>
            <person name="Brettin T."/>
            <person name="Detter J.C."/>
            <person name="Han C."/>
            <person name="Larimer F."/>
            <person name="Land M."/>
            <person name="Hauser L."/>
            <person name="Kyrpides N."/>
            <person name="Mikhailova N."/>
            <person name="Hazen T.C."/>
            <person name="Richardson P."/>
        </authorList>
    </citation>
    <scope>NUCLEOTIDE SEQUENCE [LARGE SCALE GENOMIC DNA]</scope>
    <source>
        <strain>DSM 19637 / Miyazaki F</strain>
    </source>
</reference>
<reference key="3">
    <citation type="journal article" date="1983" name="J. Biol. Chem.">
        <title>Amino acid sequence of cytochrome c-553 from Desulfovibrio vulgaris Miyazaki.</title>
        <authorList>
            <person name="Nakano K."/>
            <person name="Kikumoto Y."/>
            <person name="Yagi T."/>
        </authorList>
    </citation>
    <scope>PROTEIN SEQUENCE OF 24-102</scope>
</reference>
<reference key="4">
    <citation type="journal article" date="1990" name="J. Biochem.">
        <title>S-class cytochromes c have a variety of folding patterns: structure of cytochrome c-553 from Desulfovibrio vulgaris determined by the multi-wavelength anomalous dispersion method.</title>
        <authorList>
            <person name="Nakagawa A."/>
            <person name="Higuchi Y."/>
            <person name="Yasuoka N."/>
            <person name="Katsube Y."/>
            <person name="Yagi T."/>
        </authorList>
    </citation>
    <scope>STRUCTURE BY MULTI-WAVELENGTH ANOMALOUS DISPERSION METHOD</scope>
</reference>
<sequence>MKRILVVMSICAALAFGVSAAMAADGAALYKSCVGCHGADGSKQAMGVGHAVKGQKADELFKKLKGYADGSYGGEKKAVMTNLVKRYSDEEMKAMADYMSKL</sequence>
<evidence type="ECO:0000269" key="1">
    <source>
    </source>
</evidence>
<dbReference type="EMBL" id="D32217">
    <property type="protein sequence ID" value="BAA06973.1"/>
    <property type="molecule type" value="Genomic_DNA"/>
</dbReference>
<dbReference type="EMBL" id="CP001197">
    <property type="protein sequence ID" value="ACL07495.1"/>
    <property type="molecule type" value="Genomic_DNA"/>
</dbReference>
<dbReference type="PIR" id="A00113">
    <property type="entry name" value="CCDV5M"/>
</dbReference>
<dbReference type="PDB" id="1C53">
    <property type="method" value="X-ray"/>
    <property type="resolution" value="1.80 A"/>
    <property type="chains" value="A=24-102"/>
</dbReference>
<dbReference type="PDBsum" id="1C53"/>
<dbReference type="SMR" id="P00120"/>
<dbReference type="STRING" id="883.DvMF_0538"/>
<dbReference type="KEGG" id="dvm:DvMF_0538"/>
<dbReference type="eggNOG" id="COG2863">
    <property type="taxonomic scope" value="Bacteria"/>
</dbReference>
<dbReference type="HOGENOM" id="CLU_128253_3_1_7"/>
<dbReference type="OrthoDB" id="5340148at2"/>
<dbReference type="EvolutionaryTrace" id="P00120"/>
<dbReference type="GO" id="GO:0042597">
    <property type="term" value="C:periplasmic space"/>
    <property type="evidence" value="ECO:0007669"/>
    <property type="project" value="UniProtKB-SubCell"/>
</dbReference>
<dbReference type="GO" id="GO:0009055">
    <property type="term" value="F:electron transfer activity"/>
    <property type="evidence" value="ECO:0007669"/>
    <property type="project" value="InterPro"/>
</dbReference>
<dbReference type="GO" id="GO:0020037">
    <property type="term" value="F:heme binding"/>
    <property type="evidence" value="ECO:0007669"/>
    <property type="project" value="InterPro"/>
</dbReference>
<dbReference type="GO" id="GO:0005506">
    <property type="term" value="F:iron ion binding"/>
    <property type="evidence" value="ECO:0007669"/>
    <property type="project" value="InterPro"/>
</dbReference>
<dbReference type="Gene3D" id="1.10.760.10">
    <property type="entry name" value="Cytochrome c-like domain"/>
    <property type="match status" value="1"/>
</dbReference>
<dbReference type="InterPro" id="IPR009056">
    <property type="entry name" value="Cyt_c-like_dom"/>
</dbReference>
<dbReference type="InterPro" id="IPR036909">
    <property type="entry name" value="Cyt_c-like_dom_sf"/>
</dbReference>
<dbReference type="InterPro" id="IPR008168">
    <property type="entry name" value="Cyt_C_IC"/>
</dbReference>
<dbReference type="Pfam" id="PF00034">
    <property type="entry name" value="Cytochrom_C"/>
    <property type="match status" value="1"/>
</dbReference>
<dbReference type="PRINTS" id="PR00605">
    <property type="entry name" value="CYTCHROMECIC"/>
</dbReference>
<dbReference type="SUPFAM" id="SSF46626">
    <property type="entry name" value="Cytochrome c"/>
    <property type="match status" value="1"/>
</dbReference>
<dbReference type="PROSITE" id="PS51007">
    <property type="entry name" value="CYTC"/>
    <property type="match status" value="1"/>
</dbReference>
<accession>P00120</accession>
<accession>B8DKR6</accession>
<organism>
    <name type="scientific">Nitratidesulfovibrio vulgaris (strain DSM 19637 / Miyazaki F)</name>
    <name type="common">Desulfovibrio vulgaris</name>
    <dbReference type="NCBI Taxonomy" id="883"/>
    <lineage>
        <taxon>Bacteria</taxon>
        <taxon>Pseudomonadati</taxon>
        <taxon>Thermodesulfobacteriota</taxon>
        <taxon>Desulfovibrionia</taxon>
        <taxon>Desulfovibrionales</taxon>
        <taxon>Desulfovibrionaceae</taxon>
        <taxon>Nitratidesulfovibrio</taxon>
    </lineage>
</organism>